<feature type="chain" id="PRO_0000259765" description="Serine/threonine-protein kinase Nek5">
    <location>
        <begin position="1"/>
        <end position="708"/>
    </location>
</feature>
<feature type="domain" description="Protein kinase" evidence="2">
    <location>
        <begin position="4"/>
        <end position="259"/>
    </location>
</feature>
<feature type="region of interest" description="Disordered" evidence="4">
    <location>
        <begin position="376"/>
        <end position="403"/>
    </location>
</feature>
<feature type="region of interest" description="Disordered" evidence="4">
    <location>
        <begin position="423"/>
        <end position="454"/>
    </location>
</feature>
<feature type="compositionally biased region" description="Basic and acidic residues" evidence="4">
    <location>
        <begin position="440"/>
        <end position="454"/>
    </location>
</feature>
<feature type="active site" description="Proton acceptor" evidence="2 3">
    <location>
        <position position="128"/>
    </location>
</feature>
<feature type="binding site" evidence="2">
    <location>
        <begin position="10"/>
        <end position="18"/>
    </location>
    <ligand>
        <name>ATP</name>
        <dbReference type="ChEBI" id="CHEBI:30616"/>
    </ligand>
</feature>
<feature type="binding site" evidence="2">
    <location>
        <position position="33"/>
    </location>
    <ligand>
        <name>ATP</name>
        <dbReference type="ChEBI" id="CHEBI:30616"/>
    </ligand>
</feature>
<feature type="sequence variant" id="VAR_051652" description="In dbSNP:rs34756139.">
    <original>K</original>
    <variation>Q</variation>
    <location>
        <position position="255"/>
    </location>
</feature>
<feature type="sequence variant" id="VAR_040922" evidence="5">
    <original>R</original>
    <variation>H</variation>
    <location>
        <position position="290"/>
    </location>
</feature>
<feature type="sequence variant" id="VAR_040923" evidence="5">
    <original>C</original>
    <variation>R</variation>
    <location>
        <position position="531"/>
    </location>
</feature>
<reference key="1">
    <citation type="journal article" date="2004" name="Nature">
        <title>The DNA sequence and analysis of human chromosome 13.</title>
        <authorList>
            <person name="Dunham A."/>
            <person name="Matthews L.H."/>
            <person name="Burton J."/>
            <person name="Ashurst J.L."/>
            <person name="Howe K.L."/>
            <person name="Ashcroft K.J."/>
            <person name="Beare D.M."/>
            <person name="Burford D.C."/>
            <person name="Hunt S.E."/>
            <person name="Griffiths-Jones S."/>
            <person name="Jones M.C."/>
            <person name="Keenan S.J."/>
            <person name="Oliver K."/>
            <person name="Scott C.E."/>
            <person name="Ainscough R."/>
            <person name="Almeida J.P."/>
            <person name="Ambrose K.D."/>
            <person name="Andrews D.T."/>
            <person name="Ashwell R.I.S."/>
            <person name="Babbage A.K."/>
            <person name="Bagguley C.L."/>
            <person name="Bailey J."/>
            <person name="Bannerjee R."/>
            <person name="Barlow K.F."/>
            <person name="Bates K."/>
            <person name="Beasley H."/>
            <person name="Bird C.P."/>
            <person name="Bray-Allen S."/>
            <person name="Brown A.J."/>
            <person name="Brown J.Y."/>
            <person name="Burrill W."/>
            <person name="Carder C."/>
            <person name="Carter N.P."/>
            <person name="Chapman J.C."/>
            <person name="Clamp M.E."/>
            <person name="Clark S.Y."/>
            <person name="Clarke G."/>
            <person name="Clee C.M."/>
            <person name="Clegg S.C."/>
            <person name="Cobley V."/>
            <person name="Collins J.E."/>
            <person name="Corby N."/>
            <person name="Coville G.J."/>
            <person name="Deloukas P."/>
            <person name="Dhami P."/>
            <person name="Dunham I."/>
            <person name="Dunn M."/>
            <person name="Earthrowl M.E."/>
            <person name="Ellington A.G."/>
            <person name="Faulkner L."/>
            <person name="Frankish A.G."/>
            <person name="Frankland J."/>
            <person name="French L."/>
            <person name="Garner P."/>
            <person name="Garnett J."/>
            <person name="Gilbert J.G.R."/>
            <person name="Gilson C.J."/>
            <person name="Ghori J."/>
            <person name="Grafham D.V."/>
            <person name="Gribble S.M."/>
            <person name="Griffiths C."/>
            <person name="Hall R.E."/>
            <person name="Hammond S."/>
            <person name="Harley J.L."/>
            <person name="Hart E.A."/>
            <person name="Heath P.D."/>
            <person name="Howden P.J."/>
            <person name="Huckle E.J."/>
            <person name="Hunt P.J."/>
            <person name="Hunt A.R."/>
            <person name="Johnson C."/>
            <person name="Johnson D."/>
            <person name="Kay M."/>
            <person name="Kimberley A.M."/>
            <person name="King A."/>
            <person name="Laird G.K."/>
            <person name="Langford C.J."/>
            <person name="Lawlor S."/>
            <person name="Leongamornlert D.A."/>
            <person name="Lloyd D.M."/>
            <person name="Lloyd C."/>
            <person name="Loveland J.E."/>
            <person name="Lovell J."/>
            <person name="Martin S."/>
            <person name="Mashreghi-Mohammadi M."/>
            <person name="McLaren S.J."/>
            <person name="McMurray A."/>
            <person name="Milne S."/>
            <person name="Moore M.J.F."/>
            <person name="Nickerson T."/>
            <person name="Palmer S.A."/>
            <person name="Pearce A.V."/>
            <person name="Peck A.I."/>
            <person name="Pelan S."/>
            <person name="Phillimore B."/>
            <person name="Porter K.M."/>
            <person name="Rice C.M."/>
            <person name="Searle S."/>
            <person name="Sehra H.K."/>
            <person name="Shownkeen R."/>
            <person name="Skuce C.D."/>
            <person name="Smith M."/>
            <person name="Steward C.A."/>
            <person name="Sycamore N."/>
            <person name="Tester J."/>
            <person name="Thomas D.W."/>
            <person name="Tracey A."/>
            <person name="Tromans A."/>
            <person name="Tubby B."/>
            <person name="Wall M."/>
            <person name="Wallis J.M."/>
            <person name="West A.P."/>
            <person name="Whitehead S.L."/>
            <person name="Willey D.L."/>
            <person name="Wilming L."/>
            <person name="Wray P.W."/>
            <person name="Wright M.W."/>
            <person name="Young L."/>
            <person name="Coulson A."/>
            <person name="Durbin R.M."/>
            <person name="Hubbard T."/>
            <person name="Sulston J.E."/>
            <person name="Beck S."/>
            <person name="Bentley D.R."/>
            <person name="Rogers J."/>
            <person name="Ross M.T."/>
        </authorList>
    </citation>
    <scope>NUCLEOTIDE SEQUENCE [LARGE SCALE GENOMIC DNA]</scope>
</reference>
<reference key="2">
    <citation type="journal article" date="2004" name="Genome Res.">
        <title>The status, quality, and expansion of the NIH full-length cDNA project: the Mammalian Gene Collection (MGC).</title>
        <authorList>
            <consortium name="The MGC Project Team"/>
        </authorList>
    </citation>
    <scope>NUCLEOTIDE SEQUENCE [LARGE SCALE MRNA]</scope>
    <source>
        <tissue>Testis</tissue>
    </source>
</reference>
<reference key="3">
    <citation type="journal article" date="2007" name="Nature">
        <title>Patterns of somatic mutation in human cancer genomes.</title>
        <authorList>
            <person name="Greenman C."/>
            <person name="Stephens P."/>
            <person name="Smith R."/>
            <person name="Dalgliesh G.L."/>
            <person name="Hunter C."/>
            <person name="Bignell G."/>
            <person name="Davies H."/>
            <person name="Teague J."/>
            <person name="Butler A."/>
            <person name="Stevens C."/>
            <person name="Edkins S."/>
            <person name="O'Meara S."/>
            <person name="Vastrik I."/>
            <person name="Schmidt E.E."/>
            <person name="Avis T."/>
            <person name="Barthorpe S."/>
            <person name="Bhamra G."/>
            <person name="Buck G."/>
            <person name="Choudhury B."/>
            <person name="Clements J."/>
            <person name="Cole J."/>
            <person name="Dicks E."/>
            <person name="Forbes S."/>
            <person name="Gray K."/>
            <person name="Halliday K."/>
            <person name="Harrison R."/>
            <person name="Hills K."/>
            <person name="Hinton J."/>
            <person name="Jenkinson A."/>
            <person name="Jones D."/>
            <person name="Menzies A."/>
            <person name="Mironenko T."/>
            <person name="Perry J."/>
            <person name="Raine K."/>
            <person name="Richardson D."/>
            <person name="Shepherd R."/>
            <person name="Small A."/>
            <person name="Tofts C."/>
            <person name="Varian J."/>
            <person name="Webb T."/>
            <person name="West S."/>
            <person name="Widaa S."/>
            <person name="Yates A."/>
            <person name="Cahill D.P."/>
            <person name="Louis D.N."/>
            <person name="Goldstraw P."/>
            <person name="Nicholson A.G."/>
            <person name="Brasseur F."/>
            <person name="Looijenga L."/>
            <person name="Weber B.L."/>
            <person name="Chiew Y.-E."/>
            <person name="DeFazio A."/>
            <person name="Greaves M.F."/>
            <person name="Green A.R."/>
            <person name="Campbell P."/>
            <person name="Birney E."/>
            <person name="Easton D.F."/>
            <person name="Chenevix-Trench G."/>
            <person name="Tan M.-H."/>
            <person name="Khoo S.K."/>
            <person name="Teh B.T."/>
            <person name="Yuen S.T."/>
            <person name="Leung S.Y."/>
            <person name="Wooster R."/>
            <person name="Futreal P.A."/>
            <person name="Stratton M.R."/>
        </authorList>
    </citation>
    <scope>VARIANTS [LARGE SCALE ANALYSIS] HIS-290 AND ARG-531</scope>
</reference>
<reference key="4">
    <citation type="journal article" date="2019" name="J. Proteome Res.">
        <title>Cell Type-Specific Expression of Testis Elevated Genes Based on Transcriptomics and Antibody-Based Proteomics.</title>
        <authorList>
            <person name="Pineau C."/>
            <person name="Hikmet F."/>
            <person name="Zhang C."/>
            <person name="Oksvold P."/>
            <person name="Chen S."/>
            <person name="Fagerberg L."/>
            <person name="Uhlen M."/>
            <person name="Lindskog C."/>
        </authorList>
    </citation>
    <scope>SUBCELLULAR LOCATION</scope>
</reference>
<name>NEK5_HUMAN</name>
<gene>
    <name type="primary">NEK5</name>
</gene>
<proteinExistence type="evidence at protein level"/>
<keyword id="KW-0067">ATP-binding</keyword>
<keyword id="KW-0966">Cell projection</keyword>
<keyword id="KW-0969">Cilium</keyword>
<keyword id="KW-0282">Flagellum</keyword>
<keyword id="KW-0418">Kinase</keyword>
<keyword id="KW-0460">Magnesium</keyword>
<keyword id="KW-0479">Metal-binding</keyword>
<keyword id="KW-0547">Nucleotide-binding</keyword>
<keyword id="KW-1267">Proteomics identification</keyword>
<keyword id="KW-1185">Reference proteome</keyword>
<keyword id="KW-0723">Serine/threonine-protein kinase</keyword>
<keyword id="KW-0808">Transferase</keyword>
<dbReference type="EC" id="2.7.11.1"/>
<dbReference type="EMBL" id="AL139082">
    <property type="status" value="NOT_ANNOTATED_CDS"/>
    <property type="molecule type" value="Genomic_DNA"/>
</dbReference>
<dbReference type="EMBL" id="BC063885">
    <property type="protein sequence ID" value="AAH63885.1"/>
    <property type="molecule type" value="mRNA"/>
</dbReference>
<dbReference type="CCDS" id="CCDS31979.1"/>
<dbReference type="RefSeq" id="NP_954983.1">
    <property type="nucleotide sequence ID" value="NM_199289.3"/>
</dbReference>
<dbReference type="SMR" id="Q6P3R8"/>
<dbReference type="BioGRID" id="131150">
    <property type="interactions" value="8"/>
</dbReference>
<dbReference type="FunCoup" id="Q6P3R8">
    <property type="interactions" value="409"/>
</dbReference>
<dbReference type="IntAct" id="Q6P3R8">
    <property type="interactions" value="4"/>
</dbReference>
<dbReference type="STRING" id="9606.ENSP00000347767"/>
<dbReference type="BindingDB" id="Q6P3R8"/>
<dbReference type="ChEMBL" id="CHEMBL5044"/>
<dbReference type="DrugBank" id="DB12010">
    <property type="generic name" value="Fostamatinib"/>
</dbReference>
<dbReference type="DrugCentral" id="Q6P3R8"/>
<dbReference type="GlyGen" id="Q6P3R8">
    <property type="glycosylation" value="2 sites, 1 N-linked glycan (1 site), 1 O-linked glycan (1 site)"/>
</dbReference>
<dbReference type="iPTMnet" id="Q6P3R8"/>
<dbReference type="PhosphoSitePlus" id="Q6P3R8"/>
<dbReference type="BioMuta" id="NEK5"/>
<dbReference type="DMDM" id="74758252"/>
<dbReference type="jPOST" id="Q6P3R8"/>
<dbReference type="MassIVE" id="Q6P3R8"/>
<dbReference type="PaxDb" id="9606-ENSP00000347767"/>
<dbReference type="PeptideAtlas" id="Q6P3R8"/>
<dbReference type="ProteomicsDB" id="66925"/>
<dbReference type="Antibodypedia" id="35078">
    <property type="antibodies" value="157 antibodies from 25 providers"/>
</dbReference>
<dbReference type="DNASU" id="341676"/>
<dbReference type="Ensembl" id="ENST00000355568.8">
    <property type="protein sequence ID" value="ENSP00000347767.4"/>
    <property type="gene ID" value="ENSG00000197168.14"/>
</dbReference>
<dbReference type="Ensembl" id="ENST00000617045.1">
    <property type="protein sequence ID" value="ENSP00000477810.1"/>
    <property type="gene ID" value="ENSG00000197168.14"/>
</dbReference>
<dbReference type="GeneID" id="341676"/>
<dbReference type="KEGG" id="hsa:341676"/>
<dbReference type="UCSC" id="uc001vge.4">
    <property type="organism name" value="human"/>
</dbReference>
<dbReference type="AGR" id="HGNC:7748"/>
<dbReference type="CTD" id="341676"/>
<dbReference type="DisGeNET" id="341676"/>
<dbReference type="GeneCards" id="NEK5"/>
<dbReference type="HGNC" id="HGNC:7748">
    <property type="gene designation" value="NEK5"/>
</dbReference>
<dbReference type="HPA" id="ENSG00000197168">
    <property type="expression patterns" value="Tissue enhanced (fallopian tube, testis)"/>
</dbReference>
<dbReference type="neXtProt" id="NX_Q6P3R8"/>
<dbReference type="OpenTargets" id="ENSG00000197168"/>
<dbReference type="PharmGKB" id="PA31549"/>
<dbReference type="VEuPathDB" id="HostDB:ENSG00000197168"/>
<dbReference type="eggNOG" id="KOG0589">
    <property type="taxonomic scope" value="Eukaryota"/>
</dbReference>
<dbReference type="GeneTree" id="ENSGT00940000160136"/>
<dbReference type="HOGENOM" id="CLU_000288_63_39_1"/>
<dbReference type="InParanoid" id="Q6P3R8"/>
<dbReference type="OrthoDB" id="248923at2759"/>
<dbReference type="PAN-GO" id="Q6P3R8">
    <property type="GO annotations" value="1 GO annotation based on evolutionary models"/>
</dbReference>
<dbReference type="PhylomeDB" id="Q6P3R8"/>
<dbReference type="TreeFam" id="TF106472"/>
<dbReference type="PathwayCommons" id="Q6P3R8"/>
<dbReference type="SignaLink" id="Q6P3R8"/>
<dbReference type="SIGNOR" id="Q6P3R8"/>
<dbReference type="BioGRID-ORCS" id="341676">
    <property type="hits" value="23 hits in 1187 CRISPR screens"/>
</dbReference>
<dbReference type="ChiTaRS" id="NEK5">
    <property type="organism name" value="human"/>
</dbReference>
<dbReference type="GenomeRNAi" id="341676"/>
<dbReference type="Pharos" id="Q6P3R8">
    <property type="development level" value="Tchem"/>
</dbReference>
<dbReference type="PRO" id="PR:Q6P3R8"/>
<dbReference type="Proteomes" id="UP000005640">
    <property type="component" value="Chromosome 13"/>
</dbReference>
<dbReference type="RNAct" id="Q6P3R8">
    <property type="molecule type" value="protein"/>
</dbReference>
<dbReference type="Bgee" id="ENSG00000197168">
    <property type="expression patterns" value="Expressed in bronchial epithelial cell and 127 other cell types or tissues"/>
</dbReference>
<dbReference type="ExpressionAtlas" id="Q6P3R8">
    <property type="expression patterns" value="baseline and differential"/>
</dbReference>
<dbReference type="GO" id="GO:0005929">
    <property type="term" value="C:cilium"/>
    <property type="evidence" value="ECO:0000314"/>
    <property type="project" value="UniProtKB"/>
</dbReference>
<dbReference type="GO" id="GO:0036126">
    <property type="term" value="C:sperm flagellum"/>
    <property type="evidence" value="ECO:0000314"/>
    <property type="project" value="UniProtKB"/>
</dbReference>
<dbReference type="GO" id="GO:0005524">
    <property type="term" value="F:ATP binding"/>
    <property type="evidence" value="ECO:0007669"/>
    <property type="project" value="UniProtKB-KW"/>
</dbReference>
<dbReference type="GO" id="GO:0046872">
    <property type="term" value="F:metal ion binding"/>
    <property type="evidence" value="ECO:0007669"/>
    <property type="project" value="UniProtKB-KW"/>
</dbReference>
<dbReference type="GO" id="GO:0004672">
    <property type="term" value="F:protein kinase activity"/>
    <property type="evidence" value="ECO:0000318"/>
    <property type="project" value="GO_Central"/>
</dbReference>
<dbReference type="GO" id="GO:0106310">
    <property type="term" value="F:protein serine kinase activity"/>
    <property type="evidence" value="ECO:0007669"/>
    <property type="project" value="RHEA"/>
</dbReference>
<dbReference type="GO" id="GO:0004674">
    <property type="term" value="F:protein serine/threonine kinase activity"/>
    <property type="evidence" value="ECO:0007669"/>
    <property type="project" value="UniProtKB-KW"/>
</dbReference>
<dbReference type="CDD" id="cd08225">
    <property type="entry name" value="STKc_Nek5"/>
    <property type="match status" value="1"/>
</dbReference>
<dbReference type="FunFam" id="3.30.200.20:FF:000097">
    <property type="entry name" value="Probable serine/threonine-protein kinase nek1"/>
    <property type="match status" value="1"/>
</dbReference>
<dbReference type="FunFam" id="1.10.510.10:FF:000172">
    <property type="entry name" value="serine/threonine-protein kinase Nek1 isoform X1"/>
    <property type="match status" value="1"/>
</dbReference>
<dbReference type="Gene3D" id="3.30.200.20">
    <property type="entry name" value="Phosphorylase Kinase, domain 1"/>
    <property type="match status" value="1"/>
</dbReference>
<dbReference type="Gene3D" id="1.10.510.10">
    <property type="entry name" value="Transferase(Phosphotransferase) domain 1"/>
    <property type="match status" value="1"/>
</dbReference>
<dbReference type="InterPro" id="IPR011009">
    <property type="entry name" value="Kinase-like_dom_sf"/>
</dbReference>
<dbReference type="InterPro" id="IPR051131">
    <property type="entry name" value="NEK_Ser/Thr_kinase_NIMA"/>
</dbReference>
<dbReference type="InterPro" id="IPR000719">
    <property type="entry name" value="Prot_kinase_dom"/>
</dbReference>
<dbReference type="InterPro" id="IPR017441">
    <property type="entry name" value="Protein_kinase_ATP_BS"/>
</dbReference>
<dbReference type="InterPro" id="IPR008271">
    <property type="entry name" value="Ser/Thr_kinase_AS"/>
</dbReference>
<dbReference type="PANTHER" id="PTHR44899">
    <property type="entry name" value="CAMK FAMILY PROTEIN KINASE"/>
    <property type="match status" value="1"/>
</dbReference>
<dbReference type="PANTHER" id="PTHR44899:SF1">
    <property type="entry name" value="SERINE_THREONINE-PROTEIN KINASE NEK5"/>
    <property type="match status" value="1"/>
</dbReference>
<dbReference type="Pfam" id="PF00069">
    <property type="entry name" value="Pkinase"/>
    <property type="match status" value="1"/>
</dbReference>
<dbReference type="SMART" id="SM00220">
    <property type="entry name" value="S_TKc"/>
    <property type="match status" value="1"/>
</dbReference>
<dbReference type="SUPFAM" id="SSF56112">
    <property type="entry name" value="Protein kinase-like (PK-like)"/>
    <property type="match status" value="1"/>
</dbReference>
<dbReference type="PROSITE" id="PS00107">
    <property type="entry name" value="PROTEIN_KINASE_ATP"/>
    <property type="match status" value="1"/>
</dbReference>
<dbReference type="PROSITE" id="PS50011">
    <property type="entry name" value="PROTEIN_KINASE_DOM"/>
    <property type="match status" value="1"/>
</dbReference>
<dbReference type="PROSITE" id="PS00108">
    <property type="entry name" value="PROTEIN_KINASE_ST"/>
    <property type="match status" value="1"/>
</dbReference>
<accession>Q6P3R8</accession>
<accession>Q5TAP5</accession>
<sequence>MDKYDVIKAIGQGAFGKAYLAKGKSDSKHCVIKEINFEKMPIQEKEASKKEVILLEKMKHPNIVAFFNSFQENGRLFIVMEYCDGGDLMKRINRQRGVLFSEDQILGWFVQISLGLKHIHDRKILHRDIKAQNIFLSKNGMVAKLGDFGIARVLNNSMELARTCIGTPYYLSPEICQNKPYNNKTDIWSLGCVLYELCTLKHPFEGNNLQQLVLKICQAHFAPISPGFSRELHSLISQLFQVSPRDRPSINSILKRPFLENLIPKYLTPEVIQEEFSHMLICRAGAPASRHAGKVVQKCKIQKVRFQGKCPPRSRISVPIKRNAILHRNEWRPPAGAQKARSIKMIERPKIAAVCGHYDYYYAQLDMLRRRAHKPSYHPIPQENTGVEDYGQETRHGPSPSQWPAEYLQRKFEAQQYKLKVEKQLGLRPSSAEPNYNQRQELRSNGEEPRFQELPFRKNEMKEQEYWKQLEEIRQQYHNDMKEIRKKMGREPEENSKISHKTYLVKKSNLPVHQDASEGEAPVQMEFRSCCPGWSAMARSWLTATSASQDIEKDLKQMRLQNTKESKNPEQKYKAKKGVKFEINLDKCISDENILQEEEAMDIPNETLTFEDGMKFKEYECVKEHGDYTDKAFEKLHCPEAGFSTQTVAAVGNRRQWDGGAPQTLLQMMAVADITSTCPTGPDSESVLSVSRQEGKTKDPYSPVLILM</sequence>
<protein>
    <recommendedName>
        <fullName>Serine/threonine-protein kinase Nek5</fullName>
        <ecNumber>2.7.11.1</ecNumber>
    </recommendedName>
    <alternativeName>
        <fullName>Never in mitosis A-related kinase 5</fullName>
        <shortName>NimA-related protein kinase 5</shortName>
    </alternativeName>
</protein>
<comment type="catalytic activity">
    <reaction>
        <text>L-seryl-[protein] + ATP = O-phospho-L-seryl-[protein] + ADP + H(+)</text>
        <dbReference type="Rhea" id="RHEA:17989"/>
        <dbReference type="Rhea" id="RHEA-COMP:9863"/>
        <dbReference type="Rhea" id="RHEA-COMP:11604"/>
        <dbReference type="ChEBI" id="CHEBI:15378"/>
        <dbReference type="ChEBI" id="CHEBI:29999"/>
        <dbReference type="ChEBI" id="CHEBI:30616"/>
        <dbReference type="ChEBI" id="CHEBI:83421"/>
        <dbReference type="ChEBI" id="CHEBI:456216"/>
        <dbReference type="EC" id="2.7.11.1"/>
    </reaction>
</comment>
<comment type="catalytic activity">
    <reaction>
        <text>L-threonyl-[protein] + ATP = O-phospho-L-threonyl-[protein] + ADP + H(+)</text>
        <dbReference type="Rhea" id="RHEA:46608"/>
        <dbReference type="Rhea" id="RHEA-COMP:11060"/>
        <dbReference type="Rhea" id="RHEA-COMP:11605"/>
        <dbReference type="ChEBI" id="CHEBI:15378"/>
        <dbReference type="ChEBI" id="CHEBI:30013"/>
        <dbReference type="ChEBI" id="CHEBI:30616"/>
        <dbReference type="ChEBI" id="CHEBI:61977"/>
        <dbReference type="ChEBI" id="CHEBI:456216"/>
        <dbReference type="EC" id="2.7.11.1"/>
    </reaction>
</comment>
<comment type="cofactor">
    <cofactor evidence="1">
        <name>Mg(2+)</name>
        <dbReference type="ChEBI" id="CHEBI:18420"/>
    </cofactor>
</comment>
<comment type="subcellular location">
    <subcellularLocation>
        <location evidence="6">Cell projection</location>
        <location evidence="6">Cilium</location>
    </subcellularLocation>
    <subcellularLocation>
        <location evidence="6">Cell projection</location>
        <location evidence="6">Cilium</location>
        <location evidence="6">Flagellum</location>
    </subcellularLocation>
</comment>
<comment type="similarity">
    <text evidence="7">Belongs to the protein kinase superfamily. NEK Ser/Thr protein kinase family. NIMA subfamily.</text>
</comment>
<evidence type="ECO:0000250" key="1"/>
<evidence type="ECO:0000255" key="2">
    <source>
        <dbReference type="PROSITE-ProRule" id="PRU00159"/>
    </source>
</evidence>
<evidence type="ECO:0000255" key="3">
    <source>
        <dbReference type="PROSITE-ProRule" id="PRU10027"/>
    </source>
</evidence>
<evidence type="ECO:0000256" key="4">
    <source>
        <dbReference type="SAM" id="MobiDB-lite"/>
    </source>
</evidence>
<evidence type="ECO:0000269" key="5">
    <source>
    </source>
</evidence>
<evidence type="ECO:0000269" key="6">
    <source>
    </source>
</evidence>
<evidence type="ECO:0000305" key="7"/>
<organism>
    <name type="scientific">Homo sapiens</name>
    <name type="common">Human</name>
    <dbReference type="NCBI Taxonomy" id="9606"/>
    <lineage>
        <taxon>Eukaryota</taxon>
        <taxon>Metazoa</taxon>
        <taxon>Chordata</taxon>
        <taxon>Craniata</taxon>
        <taxon>Vertebrata</taxon>
        <taxon>Euteleostomi</taxon>
        <taxon>Mammalia</taxon>
        <taxon>Eutheria</taxon>
        <taxon>Euarchontoglires</taxon>
        <taxon>Primates</taxon>
        <taxon>Haplorrhini</taxon>
        <taxon>Catarrhini</taxon>
        <taxon>Hominidae</taxon>
        <taxon>Homo</taxon>
    </lineage>
</organism>